<protein>
    <recommendedName>
        <fullName>Methylated-DNA--protein-cysteine methyltransferase</fullName>
        <ecNumber>2.1.1.63</ecNumber>
    </recommendedName>
    <alternativeName>
        <fullName>6-O-methylguanine-DNA methyltransferase</fullName>
        <shortName>MGMT</shortName>
    </alternativeName>
    <alternativeName>
        <fullName>DNA repair MTase</fullName>
    </alternativeName>
    <alternativeName>
        <fullName>O-6-methylguanine-DNA-alkyltransferase</fullName>
    </alternativeName>
</protein>
<reference key="1">
    <citation type="journal article" date="2004" name="Nature">
        <title>Genome evolution in yeasts.</title>
        <authorList>
            <person name="Dujon B."/>
            <person name="Sherman D."/>
            <person name="Fischer G."/>
            <person name="Durrens P."/>
            <person name="Casaregola S."/>
            <person name="Lafontaine I."/>
            <person name="de Montigny J."/>
            <person name="Marck C."/>
            <person name="Neuveglise C."/>
            <person name="Talla E."/>
            <person name="Goffard N."/>
            <person name="Frangeul L."/>
            <person name="Aigle M."/>
            <person name="Anthouard V."/>
            <person name="Babour A."/>
            <person name="Barbe V."/>
            <person name="Barnay S."/>
            <person name="Blanchin S."/>
            <person name="Beckerich J.-M."/>
            <person name="Beyne E."/>
            <person name="Bleykasten C."/>
            <person name="Boisrame A."/>
            <person name="Boyer J."/>
            <person name="Cattolico L."/>
            <person name="Confanioleri F."/>
            <person name="de Daruvar A."/>
            <person name="Despons L."/>
            <person name="Fabre E."/>
            <person name="Fairhead C."/>
            <person name="Ferry-Dumazet H."/>
            <person name="Groppi A."/>
            <person name="Hantraye F."/>
            <person name="Hennequin C."/>
            <person name="Jauniaux N."/>
            <person name="Joyet P."/>
            <person name="Kachouri R."/>
            <person name="Kerrest A."/>
            <person name="Koszul R."/>
            <person name="Lemaire M."/>
            <person name="Lesur I."/>
            <person name="Ma L."/>
            <person name="Muller H."/>
            <person name="Nicaud J.-M."/>
            <person name="Nikolski M."/>
            <person name="Oztas S."/>
            <person name="Ozier-Kalogeropoulos O."/>
            <person name="Pellenz S."/>
            <person name="Potier S."/>
            <person name="Richard G.-F."/>
            <person name="Straub M.-L."/>
            <person name="Suleau A."/>
            <person name="Swennen D."/>
            <person name="Tekaia F."/>
            <person name="Wesolowski-Louvel M."/>
            <person name="Westhof E."/>
            <person name="Wirth B."/>
            <person name="Zeniou-Meyer M."/>
            <person name="Zivanovic Y."/>
            <person name="Bolotin-Fukuhara M."/>
            <person name="Thierry A."/>
            <person name="Bouchier C."/>
            <person name="Caudron B."/>
            <person name="Scarpelli C."/>
            <person name="Gaillardin C."/>
            <person name="Weissenbach J."/>
            <person name="Wincker P."/>
            <person name="Souciet J.-L."/>
        </authorList>
    </citation>
    <scope>NUCLEOTIDE SEQUENCE [LARGE SCALE GENOMIC DNA]</scope>
    <source>
        <strain>ATCC 2001 / BCRC 20586 / JCM 3761 / NBRC 0622 / NRRL Y-65 / CBS 138</strain>
    </source>
</reference>
<organism>
    <name type="scientific">Candida glabrata (strain ATCC 2001 / BCRC 20586 / JCM 3761 / NBRC 0622 / NRRL Y-65 / CBS 138)</name>
    <name type="common">Yeast</name>
    <name type="synonym">Nakaseomyces glabratus</name>
    <dbReference type="NCBI Taxonomy" id="284593"/>
    <lineage>
        <taxon>Eukaryota</taxon>
        <taxon>Fungi</taxon>
        <taxon>Dikarya</taxon>
        <taxon>Ascomycota</taxon>
        <taxon>Saccharomycotina</taxon>
        <taxon>Saccharomycetes</taxon>
        <taxon>Saccharomycetales</taxon>
        <taxon>Saccharomycetaceae</taxon>
        <taxon>Nakaseomyces</taxon>
    </lineage>
</organism>
<accession>Q6FNR0</accession>
<keyword id="KW-0227">DNA damage</keyword>
<keyword id="KW-0234">DNA repair</keyword>
<keyword id="KW-0238">DNA-binding</keyword>
<keyword id="KW-0489">Methyltransferase</keyword>
<keyword id="KW-0539">Nucleus</keyword>
<keyword id="KW-1185">Reference proteome</keyword>
<keyword id="KW-0808">Transferase</keyword>
<proteinExistence type="inferred from homology"/>
<evidence type="ECO:0000250" key="1"/>
<evidence type="ECO:0000255" key="2">
    <source>
        <dbReference type="PROSITE-ProRule" id="PRU10017"/>
    </source>
</evidence>
<evidence type="ECO:0000305" key="3"/>
<sequence length="207" mass="23642">MEDLLYSFVVTDITSALVFVRRQTDALVYASLGLNKKQLLKGARTAFNQLSKKSAIHYNFKQIEVESEQEHVEKFQDTVNKFTKLLEGHIVKDLHYEYMFGTSLQHRIWDELVKIPHGKVTTYKEIADKLKIKNGSRAIGSGIGSNNIAIVIPCHRVVCSNGTLSGYKWSTSLKRKLLEREHVYASNKKDALNKDTKISLMKYKYSA</sequence>
<comment type="function">
    <text evidence="1">Involved in the cellular defense against the biological effects of O6-methylguanine (O6-MeG) and O4-methylthymine (O4-MeT) in DNA. Repairs the methylated nucleobase in DNA by stoichiometrically transferring the methyl group to a cysteine residue in the enzyme. This is a suicide reaction: the enzyme is irreversibly inactivated.</text>
</comment>
<comment type="catalytic activity">
    <reaction evidence="2">
        <text>a 6-O-methyl-2'-deoxyguanosine in DNA + L-cysteinyl-[protein] = S-methyl-L-cysteinyl-[protein] + a 2'-deoxyguanosine in DNA</text>
        <dbReference type="Rhea" id="RHEA:24000"/>
        <dbReference type="Rhea" id="RHEA-COMP:10131"/>
        <dbReference type="Rhea" id="RHEA-COMP:10132"/>
        <dbReference type="Rhea" id="RHEA-COMP:11367"/>
        <dbReference type="Rhea" id="RHEA-COMP:11368"/>
        <dbReference type="ChEBI" id="CHEBI:29950"/>
        <dbReference type="ChEBI" id="CHEBI:82612"/>
        <dbReference type="ChEBI" id="CHEBI:85445"/>
        <dbReference type="ChEBI" id="CHEBI:85448"/>
        <dbReference type="EC" id="2.1.1.63"/>
    </reaction>
</comment>
<comment type="catalytic activity">
    <reaction evidence="2">
        <text>a 4-O-methyl-thymidine in DNA + L-cysteinyl-[protein] = a thymidine in DNA + S-methyl-L-cysteinyl-[protein]</text>
        <dbReference type="Rhea" id="RHEA:53428"/>
        <dbReference type="Rhea" id="RHEA-COMP:10131"/>
        <dbReference type="Rhea" id="RHEA-COMP:10132"/>
        <dbReference type="Rhea" id="RHEA-COMP:13555"/>
        <dbReference type="Rhea" id="RHEA-COMP:13556"/>
        <dbReference type="ChEBI" id="CHEBI:29950"/>
        <dbReference type="ChEBI" id="CHEBI:82612"/>
        <dbReference type="ChEBI" id="CHEBI:137386"/>
        <dbReference type="ChEBI" id="CHEBI:137387"/>
        <dbReference type="EC" id="2.1.1.63"/>
    </reaction>
</comment>
<comment type="subcellular location">
    <subcellularLocation>
        <location evidence="1">Nucleus</location>
    </subcellularLocation>
</comment>
<comment type="miscellaneous">
    <text>This enzyme catalyzes only one turnover and therefore is not strictly catalytic. According to one definition, an enzyme is a biocatalyst that acts repeatedly and over many reaction cycles.</text>
</comment>
<comment type="similarity">
    <text evidence="3">Belongs to the MGMT family.</text>
</comment>
<name>MGMT_CANGA</name>
<feature type="chain" id="PRO_0000333683" description="Methylated-DNA--protein-cysteine methyltransferase">
    <location>
        <begin position="1"/>
        <end position="207"/>
    </location>
</feature>
<feature type="active site" description="Nucleophile; methyl group acceptor" evidence="2">
    <location>
        <position position="154"/>
    </location>
</feature>
<feature type="binding site" evidence="1">
    <location>
        <position position="123"/>
    </location>
    <ligand>
        <name>DNA</name>
        <dbReference type="ChEBI" id="CHEBI:16991"/>
    </ligand>
</feature>
<feature type="binding site" evidence="1">
    <location>
        <position position="137"/>
    </location>
    <ligand>
        <name>DNA</name>
        <dbReference type="ChEBI" id="CHEBI:16991"/>
    </ligand>
</feature>
<feature type="binding site" evidence="1">
    <location>
        <position position="160"/>
    </location>
    <ligand>
        <name>DNA</name>
        <dbReference type="ChEBI" id="CHEBI:16991"/>
    </ligand>
</feature>
<dbReference type="EC" id="2.1.1.63"/>
<dbReference type="EMBL" id="CR380956">
    <property type="protein sequence ID" value="CAG61085.1"/>
    <property type="molecule type" value="Genomic_DNA"/>
</dbReference>
<dbReference type="RefSeq" id="XP_448134.1">
    <property type="nucleotide sequence ID" value="XM_448134.1"/>
</dbReference>
<dbReference type="SMR" id="Q6FNR0"/>
<dbReference type="FunCoup" id="Q6FNR0">
    <property type="interactions" value="58"/>
</dbReference>
<dbReference type="STRING" id="284593.Q6FNR0"/>
<dbReference type="EnsemblFungi" id="CAGL0J09768g-T">
    <property type="protein sequence ID" value="CAGL0J09768g-T-p1"/>
    <property type="gene ID" value="CAGL0J09768g"/>
</dbReference>
<dbReference type="KEGG" id="cgr:2889722"/>
<dbReference type="CGD" id="CAL0133156">
    <property type="gene designation" value="CAGL0J09768g"/>
</dbReference>
<dbReference type="VEuPathDB" id="FungiDB:B1J91_J09768g"/>
<dbReference type="VEuPathDB" id="FungiDB:CAGL0J09768g"/>
<dbReference type="eggNOG" id="KOG4062">
    <property type="taxonomic scope" value="Eukaryota"/>
</dbReference>
<dbReference type="HOGENOM" id="CLU_000445_52_2_1"/>
<dbReference type="InParanoid" id="Q6FNR0"/>
<dbReference type="OMA" id="YTFIETE"/>
<dbReference type="Proteomes" id="UP000002428">
    <property type="component" value="Chromosome J"/>
</dbReference>
<dbReference type="GO" id="GO:0005634">
    <property type="term" value="C:nucleus"/>
    <property type="evidence" value="ECO:0007669"/>
    <property type="project" value="UniProtKB-SubCell"/>
</dbReference>
<dbReference type="GO" id="GO:0003677">
    <property type="term" value="F:DNA binding"/>
    <property type="evidence" value="ECO:0007669"/>
    <property type="project" value="UniProtKB-KW"/>
</dbReference>
<dbReference type="GO" id="GO:0003908">
    <property type="term" value="F:methylated-DNA-[protein]-cysteine S-methyltransferase activity"/>
    <property type="evidence" value="ECO:0007669"/>
    <property type="project" value="UniProtKB-EC"/>
</dbReference>
<dbReference type="GO" id="GO:0006307">
    <property type="term" value="P:DNA alkylation repair"/>
    <property type="evidence" value="ECO:0007669"/>
    <property type="project" value="EnsemblFungi"/>
</dbReference>
<dbReference type="GO" id="GO:0032259">
    <property type="term" value="P:methylation"/>
    <property type="evidence" value="ECO:0007669"/>
    <property type="project" value="UniProtKB-KW"/>
</dbReference>
<dbReference type="CDD" id="cd06445">
    <property type="entry name" value="ATase"/>
    <property type="match status" value="1"/>
</dbReference>
<dbReference type="FunFam" id="1.10.10.10:FF:000214">
    <property type="entry name" value="Methylated-DNA--protein-cysteine methyltransferase"/>
    <property type="match status" value="1"/>
</dbReference>
<dbReference type="Gene3D" id="1.10.10.10">
    <property type="entry name" value="Winged helix-like DNA-binding domain superfamily/Winged helix DNA-binding domain"/>
    <property type="match status" value="1"/>
</dbReference>
<dbReference type="InterPro" id="IPR001497">
    <property type="entry name" value="MethylDNA_cys_MeTrfase_AS"/>
</dbReference>
<dbReference type="InterPro" id="IPR014048">
    <property type="entry name" value="MethylDNA_cys_MeTrfase_DNA-bd"/>
</dbReference>
<dbReference type="InterPro" id="IPR036217">
    <property type="entry name" value="MethylDNA_cys_MeTrfase_DNAb"/>
</dbReference>
<dbReference type="InterPro" id="IPR036388">
    <property type="entry name" value="WH-like_DNA-bd_sf"/>
</dbReference>
<dbReference type="NCBIfam" id="TIGR00589">
    <property type="entry name" value="ogt"/>
    <property type="match status" value="1"/>
</dbReference>
<dbReference type="PANTHER" id="PTHR10815">
    <property type="entry name" value="METHYLATED-DNA--PROTEIN-CYSTEINE METHYLTRANSFERASE"/>
    <property type="match status" value="1"/>
</dbReference>
<dbReference type="PANTHER" id="PTHR10815:SF13">
    <property type="entry name" value="METHYLATED-DNA--PROTEIN-CYSTEINE METHYLTRANSFERASE"/>
    <property type="match status" value="1"/>
</dbReference>
<dbReference type="Pfam" id="PF01035">
    <property type="entry name" value="DNA_binding_1"/>
    <property type="match status" value="1"/>
</dbReference>
<dbReference type="SUPFAM" id="SSF46767">
    <property type="entry name" value="Methylated DNA-protein cysteine methyltransferase, C-terminal domain"/>
    <property type="match status" value="1"/>
</dbReference>
<dbReference type="PROSITE" id="PS00374">
    <property type="entry name" value="MGMT"/>
    <property type="match status" value="1"/>
</dbReference>
<gene>
    <name type="primary">MGT1</name>
    <name type="ordered locus">CAGL0J09768g</name>
</gene>